<gene>
    <name type="primary">tkt</name>
    <name type="synonym">tktA</name>
    <name type="ordered locus">MPN_082</name>
    <name type="ORF">MP073</name>
</gene>
<evidence type="ECO:0000250" key="1"/>
<evidence type="ECO:0000305" key="2"/>
<keyword id="KW-0106">Calcium</keyword>
<keyword id="KW-0460">Magnesium</keyword>
<keyword id="KW-0479">Metal-binding</keyword>
<keyword id="KW-1185">Reference proteome</keyword>
<keyword id="KW-0786">Thiamine pyrophosphate</keyword>
<keyword id="KW-0808">Transferase</keyword>
<accession>P75611</accession>
<name>TKT_MYCPN</name>
<protein>
    <recommendedName>
        <fullName>Transketolase</fullName>
        <shortName>TK</shortName>
        <ecNumber>2.2.1.1</ecNumber>
    </recommendedName>
</protein>
<organism>
    <name type="scientific">Mycoplasma pneumoniae (strain ATCC 29342 / M129 / Subtype 1)</name>
    <name type="common">Mycoplasmoides pneumoniae</name>
    <dbReference type="NCBI Taxonomy" id="272634"/>
    <lineage>
        <taxon>Bacteria</taxon>
        <taxon>Bacillati</taxon>
        <taxon>Mycoplasmatota</taxon>
        <taxon>Mycoplasmoidales</taxon>
        <taxon>Mycoplasmoidaceae</taxon>
        <taxon>Mycoplasmoides</taxon>
    </lineage>
</organism>
<comment type="function">
    <text evidence="1">Catalyzes the transfer of a two-carbon ketol group from a ketose donor to an aldose acceptor, via a covalent intermediate with the cofactor thiamine pyrophosphate.</text>
</comment>
<comment type="catalytic activity">
    <reaction>
        <text>D-sedoheptulose 7-phosphate + D-glyceraldehyde 3-phosphate = aldehydo-D-ribose 5-phosphate + D-xylulose 5-phosphate</text>
        <dbReference type="Rhea" id="RHEA:10508"/>
        <dbReference type="ChEBI" id="CHEBI:57483"/>
        <dbReference type="ChEBI" id="CHEBI:57737"/>
        <dbReference type="ChEBI" id="CHEBI:58273"/>
        <dbReference type="ChEBI" id="CHEBI:59776"/>
        <dbReference type="EC" id="2.2.1.1"/>
    </reaction>
</comment>
<comment type="cofactor">
    <cofactor evidence="1">
        <name>Mg(2+)</name>
        <dbReference type="ChEBI" id="CHEBI:18420"/>
    </cofactor>
    <cofactor evidence="1">
        <name>Ca(2+)</name>
        <dbReference type="ChEBI" id="CHEBI:29108"/>
    </cofactor>
    <cofactor evidence="1">
        <name>Mn(2+)</name>
        <dbReference type="ChEBI" id="CHEBI:29035"/>
    </cofactor>
    <cofactor evidence="1">
        <name>Co(2+)</name>
        <dbReference type="ChEBI" id="CHEBI:48828"/>
    </cofactor>
    <text evidence="1">Binds 1 Mg(2+) ion per subunit. Can also utilize other divalent metal cations, such as Ca(2+), Mn(2+) and Co(2+).</text>
</comment>
<comment type="cofactor">
    <cofactor evidence="1">
        <name>thiamine diphosphate</name>
        <dbReference type="ChEBI" id="CHEBI:58937"/>
    </cofactor>
    <text evidence="1">Binds 1 thiamine pyrophosphate per subunit.</text>
</comment>
<comment type="subunit">
    <text evidence="1">Homodimer.</text>
</comment>
<comment type="interaction">
    <interactant intactId="EBI-12654979">
        <id>P75611</id>
    </interactant>
    <interactant intactId="EBI-1036653">
        <id>P04004</id>
        <label>VTN</label>
    </interactant>
    <organismsDiffer>true</organismsDiffer>
    <experiments>3</experiments>
</comment>
<comment type="similarity">
    <text evidence="2">Belongs to the transketolase family.</text>
</comment>
<feature type="chain" id="PRO_0000191862" description="Transketolase">
    <location>
        <begin position="1"/>
        <end position="648"/>
    </location>
</feature>
<feature type="active site" description="Proton donor" evidence="1">
    <location>
        <position position="397"/>
    </location>
</feature>
<feature type="binding site" evidence="1">
    <location>
        <position position="22"/>
    </location>
    <ligand>
        <name>substrate</name>
    </ligand>
</feature>
<feature type="binding site" evidence="1">
    <location>
        <position position="62"/>
    </location>
    <ligand>
        <name>thiamine diphosphate</name>
        <dbReference type="ChEBI" id="CHEBI:58937"/>
    </ligand>
</feature>
<feature type="binding site" evidence="1">
    <location>
        <begin position="109"/>
        <end position="111"/>
    </location>
    <ligand>
        <name>thiamine diphosphate</name>
        <dbReference type="ChEBI" id="CHEBI:58937"/>
    </ligand>
</feature>
<feature type="binding site" evidence="1">
    <location>
        <position position="150"/>
    </location>
    <ligand>
        <name>Mg(2+)</name>
        <dbReference type="ChEBI" id="CHEBI:18420"/>
    </ligand>
</feature>
<feature type="binding site" evidence="1">
    <location>
        <position position="151"/>
    </location>
    <ligand>
        <name>thiamine diphosphate</name>
        <dbReference type="ChEBI" id="CHEBI:58937"/>
    </ligand>
</feature>
<feature type="binding site" evidence="1">
    <location>
        <position position="180"/>
    </location>
    <ligand>
        <name>Mg(2+)</name>
        <dbReference type="ChEBI" id="CHEBI:18420"/>
    </ligand>
</feature>
<feature type="binding site" evidence="1">
    <location>
        <position position="180"/>
    </location>
    <ligand>
        <name>thiamine diphosphate</name>
        <dbReference type="ChEBI" id="CHEBI:58937"/>
    </ligand>
</feature>
<feature type="binding site" evidence="1">
    <location>
        <position position="182"/>
    </location>
    <ligand>
        <name>Mg(2+)</name>
        <dbReference type="ChEBI" id="CHEBI:18420"/>
    </ligand>
</feature>
<feature type="binding site" evidence="1">
    <location>
        <position position="252"/>
    </location>
    <ligand>
        <name>substrate</name>
    </ligand>
</feature>
<feature type="binding site" evidence="1">
    <location>
        <position position="252"/>
    </location>
    <ligand>
        <name>thiamine diphosphate</name>
        <dbReference type="ChEBI" id="CHEBI:58937"/>
    </ligand>
</feature>
<feature type="binding site" evidence="1">
    <location>
        <position position="345"/>
    </location>
    <ligand>
        <name>substrate</name>
    </ligand>
</feature>
<feature type="binding site" evidence="1">
    <location>
        <position position="372"/>
    </location>
    <ligand>
        <name>substrate</name>
    </ligand>
</feature>
<feature type="binding site" evidence="1">
    <location>
        <position position="423"/>
    </location>
    <ligand>
        <name>thiamine diphosphate</name>
        <dbReference type="ChEBI" id="CHEBI:58937"/>
    </ligand>
</feature>
<feature type="binding site" evidence="1">
    <location>
        <position position="447"/>
    </location>
    <ligand>
        <name>substrate</name>
    </ligand>
</feature>
<feature type="binding site" evidence="1">
    <location>
        <position position="455"/>
    </location>
    <ligand>
        <name>substrate</name>
    </ligand>
</feature>
<feature type="binding site" evidence="1">
    <location>
        <position position="506"/>
    </location>
    <ligand>
        <name>substrate</name>
    </ligand>
</feature>
<feature type="site" description="Important for catalytic activity" evidence="1">
    <location>
        <position position="22"/>
    </location>
</feature>
<feature type="site" description="Important for catalytic activity" evidence="1">
    <location>
        <position position="252"/>
    </location>
</feature>
<sequence length="648" mass="72378">MKNLFACQHLALSAIQHAKGGHVGMALGASPILYTLWTKHIQFNPNCPKWINRDRLVMSAGHGSMALYPILHFAGLITKQEMLHHKYGQVNTSSHPEYAPNNFIDASTGPLGQGLGMAVGMALTQRVLAAEFKALSPKLFDHFTYVVVGDGDLQEGVSYEVAHLAGVYQLNKLIVLHDSNRVQMDSVVRDVSLENLQTRFTNMGWNYLETSDAVADIDAAIKQAKKSDKPTFIEVHTTIAKNTTLEDQPAGHWFIPTDKDFARFNSNTKTNFTPFEYPQTVYDFFHKQVIARQAKPVQAYKELLEKLKDKPLYTKFINWTENDYQALYLNQLDERKVAQANAATRNYLKDFLGQINNSNSNLYCLNADVARSCNIKLGDDNLHTNPHSRNIQVGIREFGMSTIMNGMALHGGVKVMGGTFLAFADYSKPAIRLGALMNLPTFYVYTHDSYQVGGDGPTHQPYDQLPMLRAIENVQVWRPCDEKETAAGVNYGLLSQDQTNVLILTRQALPSLEQSDSVQTLKGGYIISNRKQPDVIVAASGSEVQLALQLEQALNEQQLKTRVVSVPNINMLLSQPQSYLQQLFDPNSVLLTLEASASMEWYALAKYVKKHTHLGAFSFGESNDGQVVYEHKGFNVTNLLKLIKTLKS</sequence>
<proteinExistence type="evidence at protein level"/>
<dbReference type="EC" id="2.2.1.1"/>
<dbReference type="EMBL" id="U00089">
    <property type="protein sequence ID" value="AAB95721.1"/>
    <property type="molecule type" value="Genomic_DNA"/>
</dbReference>
<dbReference type="PIR" id="S73399">
    <property type="entry name" value="S73399"/>
</dbReference>
<dbReference type="RefSeq" id="NP_109770.1">
    <property type="nucleotide sequence ID" value="NC_000912.1"/>
</dbReference>
<dbReference type="RefSeq" id="WP_010874439.1">
    <property type="nucleotide sequence ID" value="NZ_OU342337.1"/>
</dbReference>
<dbReference type="SMR" id="P75611"/>
<dbReference type="IntAct" id="P75611">
    <property type="interactions" value="2"/>
</dbReference>
<dbReference type="STRING" id="272634.MPN_082"/>
<dbReference type="EnsemblBacteria" id="AAB95721">
    <property type="protein sequence ID" value="AAB95721"/>
    <property type="gene ID" value="MPN_082"/>
</dbReference>
<dbReference type="KEGG" id="mpn:MPN_082"/>
<dbReference type="PATRIC" id="fig|272634.6.peg.84"/>
<dbReference type="HOGENOM" id="CLU_009227_0_0_14"/>
<dbReference type="OrthoDB" id="8732661at2"/>
<dbReference type="BioCyc" id="MetaCyc:MONOMER-583"/>
<dbReference type="BioCyc" id="MPNE272634:G1GJ3-129-MONOMER"/>
<dbReference type="Proteomes" id="UP000000808">
    <property type="component" value="Chromosome"/>
</dbReference>
<dbReference type="GO" id="GO:0005829">
    <property type="term" value="C:cytosol"/>
    <property type="evidence" value="ECO:0000314"/>
    <property type="project" value="AgBase"/>
</dbReference>
<dbReference type="GO" id="GO:0016020">
    <property type="term" value="C:membrane"/>
    <property type="evidence" value="ECO:0000314"/>
    <property type="project" value="AgBase"/>
</dbReference>
<dbReference type="GO" id="GO:0046872">
    <property type="term" value="F:metal ion binding"/>
    <property type="evidence" value="ECO:0007669"/>
    <property type="project" value="UniProtKB-KW"/>
</dbReference>
<dbReference type="GO" id="GO:0004802">
    <property type="term" value="F:transketolase activity"/>
    <property type="evidence" value="ECO:0007669"/>
    <property type="project" value="UniProtKB-EC"/>
</dbReference>
<dbReference type="GO" id="GO:0006098">
    <property type="term" value="P:pentose-phosphate shunt"/>
    <property type="evidence" value="ECO:0007669"/>
    <property type="project" value="TreeGrafter"/>
</dbReference>
<dbReference type="CDD" id="cd07033">
    <property type="entry name" value="TPP_PYR_DXS_TK_like"/>
    <property type="match status" value="1"/>
</dbReference>
<dbReference type="CDD" id="cd02012">
    <property type="entry name" value="TPP_TK"/>
    <property type="match status" value="1"/>
</dbReference>
<dbReference type="FunFam" id="3.40.50.970:FF:000045">
    <property type="entry name" value="Transketolase"/>
    <property type="match status" value="1"/>
</dbReference>
<dbReference type="FunFam" id="3.40.50.970:FF:000081">
    <property type="entry name" value="Transketolase"/>
    <property type="match status" value="1"/>
</dbReference>
<dbReference type="Gene3D" id="3.40.50.920">
    <property type="match status" value="1"/>
</dbReference>
<dbReference type="Gene3D" id="3.40.50.970">
    <property type="match status" value="2"/>
</dbReference>
<dbReference type="InterPro" id="IPR029061">
    <property type="entry name" value="THDP-binding"/>
</dbReference>
<dbReference type="InterPro" id="IPR009014">
    <property type="entry name" value="Transketo_C/PFOR_II"/>
</dbReference>
<dbReference type="InterPro" id="IPR055152">
    <property type="entry name" value="Transketolase-like_C_2"/>
</dbReference>
<dbReference type="InterPro" id="IPR005475">
    <property type="entry name" value="Transketolase-like_Pyr-bd"/>
</dbReference>
<dbReference type="InterPro" id="IPR005478">
    <property type="entry name" value="Transketolase_bac-like"/>
</dbReference>
<dbReference type="InterPro" id="IPR020826">
    <property type="entry name" value="Transketolase_BS"/>
</dbReference>
<dbReference type="InterPro" id="IPR033247">
    <property type="entry name" value="Transketolase_fam"/>
</dbReference>
<dbReference type="InterPro" id="IPR005474">
    <property type="entry name" value="Transketolase_N"/>
</dbReference>
<dbReference type="NCBIfam" id="NF004558">
    <property type="entry name" value="PRK05899.2-4"/>
    <property type="match status" value="1"/>
</dbReference>
<dbReference type="NCBIfam" id="TIGR00232">
    <property type="entry name" value="tktlase_bact"/>
    <property type="match status" value="1"/>
</dbReference>
<dbReference type="PANTHER" id="PTHR43522">
    <property type="entry name" value="TRANSKETOLASE"/>
    <property type="match status" value="1"/>
</dbReference>
<dbReference type="PANTHER" id="PTHR43522:SF2">
    <property type="entry name" value="TRANSKETOLASE 1-RELATED"/>
    <property type="match status" value="1"/>
</dbReference>
<dbReference type="Pfam" id="PF02779">
    <property type="entry name" value="Transket_pyr"/>
    <property type="match status" value="1"/>
</dbReference>
<dbReference type="Pfam" id="PF22613">
    <property type="entry name" value="Transketolase_C_1"/>
    <property type="match status" value="1"/>
</dbReference>
<dbReference type="Pfam" id="PF00456">
    <property type="entry name" value="Transketolase_N"/>
    <property type="match status" value="1"/>
</dbReference>
<dbReference type="SMART" id="SM00861">
    <property type="entry name" value="Transket_pyr"/>
    <property type="match status" value="1"/>
</dbReference>
<dbReference type="SUPFAM" id="SSF52518">
    <property type="entry name" value="Thiamin diphosphate-binding fold (THDP-binding)"/>
    <property type="match status" value="2"/>
</dbReference>
<dbReference type="SUPFAM" id="SSF52922">
    <property type="entry name" value="TK C-terminal domain-like"/>
    <property type="match status" value="1"/>
</dbReference>
<dbReference type="PROSITE" id="PS00802">
    <property type="entry name" value="TRANSKETOLASE_2"/>
    <property type="match status" value="1"/>
</dbReference>
<reference key="1">
    <citation type="journal article" date="1996" name="Nucleic Acids Res.">
        <title>Complete sequence analysis of the genome of the bacterium Mycoplasma pneumoniae.</title>
        <authorList>
            <person name="Himmelreich R."/>
            <person name="Hilbert H."/>
            <person name="Plagens H."/>
            <person name="Pirkl E."/>
            <person name="Li B.-C."/>
            <person name="Herrmann R."/>
        </authorList>
    </citation>
    <scope>NUCLEOTIDE SEQUENCE [LARGE SCALE GENOMIC DNA]</scope>
    <source>
        <strain>ATCC 29342 / M129 / Subtype 1</strain>
    </source>
</reference>
<reference key="2">
    <citation type="journal article" date="2000" name="Electrophoresis">
        <title>Towards a two-dimensional proteome map of Mycoplasma pneumoniae.</title>
        <authorList>
            <person name="Regula J.T."/>
            <person name="Ueberle B."/>
            <person name="Boguth G."/>
            <person name="Goerg A."/>
            <person name="Schnoelzer M."/>
            <person name="Herrmann R."/>
            <person name="Frank R."/>
        </authorList>
    </citation>
    <scope>IDENTIFICATION BY MASS SPECTROMETRY</scope>
    <source>
        <strain>ATCC 29342 / M129 / Subtype 1</strain>
    </source>
</reference>